<name>EX7S_RICCN</name>
<dbReference type="EC" id="3.1.11.6" evidence="1"/>
<dbReference type="EMBL" id="AE006914">
    <property type="protein sequence ID" value="AAL03013.1"/>
    <property type="molecule type" value="Genomic_DNA"/>
</dbReference>
<dbReference type="PIR" id="C97759">
    <property type="entry name" value="C97759"/>
</dbReference>
<dbReference type="RefSeq" id="WP_004996011.1">
    <property type="nucleotide sequence ID" value="NC_003103.1"/>
</dbReference>
<dbReference type="SMR" id="Q92IE5"/>
<dbReference type="KEGG" id="rco:RC0475"/>
<dbReference type="HOGENOM" id="CLU_145918_0_3_5"/>
<dbReference type="Proteomes" id="UP000000816">
    <property type="component" value="Chromosome"/>
</dbReference>
<dbReference type="GO" id="GO:0005829">
    <property type="term" value="C:cytosol"/>
    <property type="evidence" value="ECO:0007669"/>
    <property type="project" value="TreeGrafter"/>
</dbReference>
<dbReference type="GO" id="GO:0009318">
    <property type="term" value="C:exodeoxyribonuclease VII complex"/>
    <property type="evidence" value="ECO:0007669"/>
    <property type="project" value="InterPro"/>
</dbReference>
<dbReference type="GO" id="GO:0008855">
    <property type="term" value="F:exodeoxyribonuclease VII activity"/>
    <property type="evidence" value="ECO:0007669"/>
    <property type="project" value="UniProtKB-UniRule"/>
</dbReference>
<dbReference type="GO" id="GO:0006308">
    <property type="term" value="P:DNA catabolic process"/>
    <property type="evidence" value="ECO:0007669"/>
    <property type="project" value="UniProtKB-UniRule"/>
</dbReference>
<dbReference type="Gene3D" id="1.10.287.1040">
    <property type="entry name" value="Exonuclease VII, small subunit"/>
    <property type="match status" value="1"/>
</dbReference>
<dbReference type="HAMAP" id="MF_00337">
    <property type="entry name" value="Exonuc_7_S"/>
    <property type="match status" value="1"/>
</dbReference>
<dbReference type="InterPro" id="IPR003761">
    <property type="entry name" value="Exonuc_VII_S"/>
</dbReference>
<dbReference type="InterPro" id="IPR037004">
    <property type="entry name" value="Exonuc_VII_ssu_sf"/>
</dbReference>
<dbReference type="NCBIfam" id="NF002139">
    <property type="entry name" value="PRK00977.1-3"/>
    <property type="match status" value="1"/>
</dbReference>
<dbReference type="NCBIfam" id="NF002140">
    <property type="entry name" value="PRK00977.1-4"/>
    <property type="match status" value="1"/>
</dbReference>
<dbReference type="NCBIfam" id="TIGR01280">
    <property type="entry name" value="xseB"/>
    <property type="match status" value="1"/>
</dbReference>
<dbReference type="PANTHER" id="PTHR34137">
    <property type="entry name" value="EXODEOXYRIBONUCLEASE 7 SMALL SUBUNIT"/>
    <property type="match status" value="1"/>
</dbReference>
<dbReference type="PANTHER" id="PTHR34137:SF1">
    <property type="entry name" value="EXODEOXYRIBONUCLEASE 7 SMALL SUBUNIT"/>
    <property type="match status" value="1"/>
</dbReference>
<dbReference type="Pfam" id="PF02609">
    <property type="entry name" value="Exonuc_VII_S"/>
    <property type="match status" value="1"/>
</dbReference>
<dbReference type="PIRSF" id="PIRSF006488">
    <property type="entry name" value="Exonuc_VII_S"/>
    <property type="match status" value="1"/>
</dbReference>
<dbReference type="SUPFAM" id="SSF116842">
    <property type="entry name" value="XseB-like"/>
    <property type="match status" value="1"/>
</dbReference>
<sequence>MTNTKTLEANISFEEALKELEEIVKKIDNGQESLETAVNSFERGILLKNHCEKKLKEARLKIEKITKLADSTVVLEEMEV</sequence>
<reference key="1">
    <citation type="journal article" date="2001" name="Science">
        <title>Mechanisms of evolution in Rickettsia conorii and R. prowazekii.</title>
        <authorList>
            <person name="Ogata H."/>
            <person name="Audic S."/>
            <person name="Renesto-Audiffren P."/>
            <person name="Fournier P.-E."/>
            <person name="Barbe V."/>
            <person name="Samson D."/>
            <person name="Roux V."/>
            <person name="Cossart P."/>
            <person name="Weissenbach J."/>
            <person name="Claverie J.-M."/>
            <person name="Raoult D."/>
        </authorList>
    </citation>
    <scope>NUCLEOTIDE SEQUENCE [LARGE SCALE GENOMIC DNA]</scope>
    <source>
        <strain>ATCC VR-613 / Malish 7</strain>
    </source>
</reference>
<organism>
    <name type="scientific">Rickettsia conorii (strain ATCC VR-613 / Malish 7)</name>
    <dbReference type="NCBI Taxonomy" id="272944"/>
    <lineage>
        <taxon>Bacteria</taxon>
        <taxon>Pseudomonadati</taxon>
        <taxon>Pseudomonadota</taxon>
        <taxon>Alphaproteobacteria</taxon>
        <taxon>Rickettsiales</taxon>
        <taxon>Rickettsiaceae</taxon>
        <taxon>Rickettsieae</taxon>
        <taxon>Rickettsia</taxon>
        <taxon>spotted fever group</taxon>
    </lineage>
</organism>
<comment type="function">
    <text evidence="1">Bidirectionally degrades single-stranded DNA into large acid-insoluble oligonucleotides, which are then degraded further into small acid-soluble oligonucleotides.</text>
</comment>
<comment type="catalytic activity">
    <reaction evidence="1">
        <text>Exonucleolytic cleavage in either 5'- to 3'- or 3'- to 5'-direction to yield nucleoside 5'-phosphates.</text>
        <dbReference type="EC" id="3.1.11.6"/>
    </reaction>
</comment>
<comment type="subunit">
    <text evidence="1">Heterooligomer composed of large and small subunits.</text>
</comment>
<comment type="subcellular location">
    <subcellularLocation>
        <location evidence="1">Cytoplasm</location>
    </subcellularLocation>
</comment>
<comment type="similarity">
    <text evidence="1">Belongs to the XseB family.</text>
</comment>
<proteinExistence type="inferred from homology"/>
<gene>
    <name evidence="1" type="primary">xseB</name>
    <name type="ordered locus">RC0475</name>
</gene>
<evidence type="ECO:0000255" key="1">
    <source>
        <dbReference type="HAMAP-Rule" id="MF_00337"/>
    </source>
</evidence>
<protein>
    <recommendedName>
        <fullName evidence="1">Exodeoxyribonuclease 7 small subunit</fullName>
        <ecNumber evidence="1">3.1.11.6</ecNumber>
    </recommendedName>
    <alternativeName>
        <fullName evidence="1">Exodeoxyribonuclease VII small subunit</fullName>
        <shortName evidence="1">Exonuclease VII small subunit</shortName>
    </alternativeName>
</protein>
<accession>Q92IE5</accession>
<keyword id="KW-0963">Cytoplasm</keyword>
<keyword id="KW-0269">Exonuclease</keyword>
<keyword id="KW-0378">Hydrolase</keyword>
<keyword id="KW-0540">Nuclease</keyword>
<feature type="chain" id="PRO_0000206995" description="Exodeoxyribonuclease 7 small subunit">
    <location>
        <begin position="1"/>
        <end position="80"/>
    </location>
</feature>